<evidence type="ECO:0000255" key="1">
    <source>
        <dbReference type="HAMAP-Rule" id="MF_00193"/>
    </source>
</evidence>
<sequence>MEIRERILADMQVAETIDAHEEIRKSVEFLKAYLKKNTFLKSFVLGISGGQDSTLTGKLAQMAISEMRAETGDDEYQFFAVSLPYGTQLDESDRQDALNFMEPDNRLTVNIKASVDASVAALAEAGVELSDFAKGNEKARERMKVQYAIAAMHKGVVVGTDHSAEAVTGFYTKYGDGGTDINPLFRLNKRQGKALLKELGCPEHLYLKKPTADLEDNKPALPDEVALGVTYDQIDDYLEGKEVPADAAAKIENWFIKTEHKRHMAITIFDDFWK</sequence>
<comment type="function">
    <text evidence="1">Catalyzes the ATP-dependent amidation of deamido-NAD to form NAD. Uses ammonia as a nitrogen source.</text>
</comment>
<comment type="catalytic activity">
    <reaction evidence="1">
        <text>deamido-NAD(+) + NH4(+) + ATP = AMP + diphosphate + NAD(+) + H(+)</text>
        <dbReference type="Rhea" id="RHEA:21188"/>
        <dbReference type="ChEBI" id="CHEBI:15378"/>
        <dbReference type="ChEBI" id="CHEBI:28938"/>
        <dbReference type="ChEBI" id="CHEBI:30616"/>
        <dbReference type="ChEBI" id="CHEBI:33019"/>
        <dbReference type="ChEBI" id="CHEBI:57540"/>
        <dbReference type="ChEBI" id="CHEBI:58437"/>
        <dbReference type="ChEBI" id="CHEBI:456215"/>
        <dbReference type="EC" id="6.3.1.5"/>
    </reaction>
</comment>
<comment type="pathway">
    <text evidence="1">Cofactor biosynthesis; NAD(+) biosynthesis; NAD(+) from deamido-NAD(+) (ammonia route): step 1/1.</text>
</comment>
<comment type="subunit">
    <text evidence="1">Homodimer.</text>
</comment>
<comment type="similarity">
    <text evidence="1">Belongs to the NAD synthetase family.</text>
</comment>
<dbReference type="EC" id="6.3.1.5" evidence="1"/>
<dbReference type="EMBL" id="CP001175">
    <property type="protein sequence ID" value="ACK39884.1"/>
    <property type="molecule type" value="Genomic_DNA"/>
</dbReference>
<dbReference type="RefSeq" id="WP_003727000.1">
    <property type="nucleotide sequence ID" value="NC_011660.1"/>
</dbReference>
<dbReference type="SMR" id="B8DCC1"/>
<dbReference type="KEGG" id="lmh:LMHCC_1540"/>
<dbReference type="HOGENOM" id="CLU_059327_3_0_9"/>
<dbReference type="UniPathway" id="UPA00253">
    <property type="reaction ID" value="UER00333"/>
</dbReference>
<dbReference type="GO" id="GO:0005737">
    <property type="term" value="C:cytoplasm"/>
    <property type="evidence" value="ECO:0007669"/>
    <property type="project" value="InterPro"/>
</dbReference>
<dbReference type="GO" id="GO:0005524">
    <property type="term" value="F:ATP binding"/>
    <property type="evidence" value="ECO:0007669"/>
    <property type="project" value="UniProtKB-UniRule"/>
</dbReference>
<dbReference type="GO" id="GO:0004359">
    <property type="term" value="F:glutaminase activity"/>
    <property type="evidence" value="ECO:0007669"/>
    <property type="project" value="InterPro"/>
</dbReference>
<dbReference type="GO" id="GO:0046872">
    <property type="term" value="F:metal ion binding"/>
    <property type="evidence" value="ECO:0007669"/>
    <property type="project" value="UniProtKB-KW"/>
</dbReference>
<dbReference type="GO" id="GO:0003952">
    <property type="term" value="F:NAD+ synthase (glutamine-hydrolyzing) activity"/>
    <property type="evidence" value="ECO:0007669"/>
    <property type="project" value="InterPro"/>
</dbReference>
<dbReference type="GO" id="GO:0008795">
    <property type="term" value="F:NAD+ synthase activity"/>
    <property type="evidence" value="ECO:0007669"/>
    <property type="project" value="UniProtKB-UniRule"/>
</dbReference>
<dbReference type="GO" id="GO:0009435">
    <property type="term" value="P:NAD biosynthetic process"/>
    <property type="evidence" value="ECO:0007669"/>
    <property type="project" value="UniProtKB-UniRule"/>
</dbReference>
<dbReference type="CDD" id="cd00553">
    <property type="entry name" value="NAD_synthase"/>
    <property type="match status" value="1"/>
</dbReference>
<dbReference type="FunFam" id="3.40.50.620:FF:000015">
    <property type="entry name" value="NH(3)-dependent NAD(+) synthetase"/>
    <property type="match status" value="1"/>
</dbReference>
<dbReference type="Gene3D" id="3.40.50.620">
    <property type="entry name" value="HUPs"/>
    <property type="match status" value="1"/>
</dbReference>
<dbReference type="HAMAP" id="MF_00193">
    <property type="entry name" value="NadE_ammonia_dep"/>
    <property type="match status" value="1"/>
</dbReference>
<dbReference type="InterPro" id="IPR022310">
    <property type="entry name" value="NAD/GMP_synthase"/>
</dbReference>
<dbReference type="InterPro" id="IPR003694">
    <property type="entry name" value="NAD_synthase"/>
</dbReference>
<dbReference type="InterPro" id="IPR022926">
    <property type="entry name" value="NH(3)-dep_NAD(+)_synth"/>
</dbReference>
<dbReference type="InterPro" id="IPR014729">
    <property type="entry name" value="Rossmann-like_a/b/a_fold"/>
</dbReference>
<dbReference type="NCBIfam" id="TIGR00552">
    <property type="entry name" value="nadE"/>
    <property type="match status" value="1"/>
</dbReference>
<dbReference type="NCBIfam" id="NF001979">
    <property type="entry name" value="PRK00768.1"/>
    <property type="match status" value="1"/>
</dbReference>
<dbReference type="PANTHER" id="PTHR23090">
    <property type="entry name" value="NH 3 /GLUTAMINE-DEPENDENT NAD + SYNTHETASE"/>
    <property type="match status" value="1"/>
</dbReference>
<dbReference type="PANTHER" id="PTHR23090:SF7">
    <property type="entry name" value="NH(3)-DEPENDENT NAD(+) SYNTHETASE"/>
    <property type="match status" value="1"/>
</dbReference>
<dbReference type="Pfam" id="PF02540">
    <property type="entry name" value="NAD_synthase"/>
    <property type="match status" value="1"/>
</dbReference>
<dbReference type="SUPFAM" id="SSF52402">
    <property type="entry name" value="Adenine nucleotide alpha hydrolases-like"/>
    <property type="match status" value="1"/>
</dbReference>
<keyword id="KW-0067">ATP-binding</keyword>
<keyword id="KW-0436">Ligase</keyword>
<keyword id="KW-0460">Magnesium</keyword>
<keyword id="KW-0479">Metal-binding</keyword>
<keyword id="KW-0520">NAD</keyword>
<keyword id="KW-0547">Nucleotide-binding</keyword>
<protein>
    <recommendedName>
        <fullName evidence="1">NH(3)-dependent NAD(+) synthetase</fullName>
        <ecNumber evidence="1">6.3.1.5</ecNumber>
    </recommendedName>
</protein>
<reference key="1">
    <citation type="journal article" date="2011" name="J. Bacteriol.">
        <title>Genome sequence of lineage III Listeria monocytogenes strain HCC23.</title>
        <authorList>
            <person name="Steele C.L."/>
            <person name="Donaldson J.R."/>
            <person name="Paul D."/>
            <person name="Banes M.M."/>
            <person name="Arick T."/>
            <person name="Bridges S.M."/>
            <person name="Lawrence M.L."/>
        </authorList>
    </citation>
    <scope>NUCLEOTIDE SEQUENCE [LARGE SCALE GENOMIC DNA]</scope>
    <source>
        <strain>HCC23</strain>
    </source>
</reference>
<name>NADE_LISMH</name>
<proteinExistence type="inferred from homology"/>
<gene>
    <name evidence="1" type="primary">nadE</name>
    <name type="ordered locus">LMHCC_1540</name>
</gene>
<organism>
    <name type="scientific">Listeria monocytogenes serotype 4a (strain HCC23)</name>
    <dbReference type="NCBI Taxonomy" id="552536"/>
    <lineage>
        <taxon>Bacteria</taxon>
        <taxon>Bacillati</taxon>
        <taxon>Bacillota</taxon>
        <taxon>Bacilli</taxon>
        <taxon>Bacillales</taxon>
        <taxon>Listeriaceae</taxon>
        <taxon>Listeria</taxon>
    </lineage>
</organism>
<accession>B8DCC1</accession>
<feature type="chain" id="PRO_1000191503" description="NH(3)-dependent NAD(+) synthetase">
    <location>
        <begin position="1"/>
        <end position="274"/>
    </location>
</feature>
<feature type="binding site" evidence="1">
    <location>
        <begin position="46"/>
        <end position="53"/>
    </location>
    <ligand>
        <name>ATP</name>
        <dbReference type="ChEBI" id="CHEBI:30616"/>
    </ligand>
</feature>
<feature type="binding site" evidence="1">
    <location>
        <position position="52"/>
    </location>
    <ligand>
        <name>Mg(2+)</name>
        <dbReference type="ChEBI" id="CHEBI:18420"/>
    </ligand>
</feature>
<feature type="binding site" evidence="1">
    <location>
        <position position="140"/>
    </location>
    <ligand>
        <name>deamido-NAD(+)</name>
        <dbReference type="ChEBI" id="CHEBI:58437"/>
    </ligand>
</feature>
<feature type="binding site" evidence="1">
    <location>
        <position position="160"/>
    </location>
    <ligand>
        <name>ATP</name>
        <dbReference type="ChEBI" id="CHEBI:30616"/>
    </ligand>
</feature>
<feature type="binding site" evidence="1">
    <location>
        <position position="165"/>
    </location>
    <ligand>
        <name>Mg(2+)</name>
        <dbReference type="ChEBI" id="CHEBI:18420"/>
    </ligand>
</feature>
<feature type="binding site" evidence="1">
    <location>
        <position position="173"/>
    </location>
    <ligand>
        <name>deamido-NAD(+)</name>
        <dbReference type="ChEBI" id="CHEBI:58437"/>
    </ligand>
</feature>
<feature type="binding site" evidence="1">
    <location>
        <position position="180"/>
    </location>
    <ligand>
        <name>deamido-NAD(+)</name>
        <dbReference type="ChEBI" id="CHEBI:58437"/>
    </ligand>
</feature>
<feature type="binding site" evidence="1">
    <location>
        <position position="189"/>
    </location>
    <ligand>
        <name>ATP</name>
        <dbReference type="ChEBI" id="CHEBI:30616"/>
    </ligand>
</feature>
<feature type="binding site" evidence="1">
    <location>
        <position position="211"/>
    </location>
    <ligand>
        <name>ATP</name>
        <dbReference type="ChEBI" id="CHEBI:30616"/>
    </ligand>
</feature>
<feature type="binding site" evidence="1">
    <location>
        <begin position="260"/>
        <end position="261"/>
    </location>
    <ligand>
        <name>deamido-NAD(+)</name>
        <dbReference type="ChEBI" id="CHEBI:58437"/>
    </ligand>
</feature>